<feature type="chain" id="PRO_0000182952" description="Deoxyuridine 5'-triphosphate nucleotidohydrolase">
    <location>
        <begin position="1"/>
        <end position="371"/>
    </location>
</feature>
<feature type="region of interest" description="Disordered" evidence="2">
    <location>
        <begin position="350"/>
        <end position="371"/>
    </location>
</feature>
<feature type="compositionally biased region" description="Gly residues" evidence="2">
    <location>
        <begin position="362"/>
        <end position="371"/>
    </location>
</feature>
<feature type="binding site" evidence="1">
    <location>
        <begin position="260"/>
        <end position="262"/>
    </location>
    <ligand>
        <name>substrate</name>
    </ligand>
</feature>
<feature type="binding site" evidence="1">
    <location>
        <begin position="366"/>
        <end position="367"/>
    </location>
    <ligand>
        <name>substrate</name>
    </ligand>
</feature>
<gene>
    <name evidence="1" type="primary">DUT</name>
    <name type="ordered locus">UL50</name>
</gene>
<name>DUT_HHV11</name>
<organismHost>
    <name type="scientific">Homo sapiens</name>
    <name type="common">Human</name>
    <dbReference type="NCBI Taxonomy" id="9606"/>
</organismHost>
<reference key="1">
    <citation type="journal article" date="1988" name="J. Gen. Virol.">
        <title>The complete DNA sequence of the long unique region in the genome of herpes simplex virus type 1.</title>
        <authorList>
            <person name="McGeoch D.J."/>
            <person name="Dalrymple M.A."/>
            <person name="Davison A.J."/>
            <person name="Dolan A."/>
            <person name="Frame M.C."/>
            <person name="McNab D."/>
            <person name="Perry L.J."/>
            <person name="Scott J.E."/>
            <person name="Taylor P."/>
        </authorList>
    </citation>
    <scope>NUCLEOTIDE SEQUENCE [LARGE SCALE GENOMIC DNA]</scope>
</reference>
<reference key="2">
    <citation type="journal article" date="2007" name="Microbes Infect.">
        <title>Determination and analysis of the DNA sequence of highly attenuated herpes simplex virus type 1 mutant HF10, a potential oncolytic virus.</title>
        <authorList>
            <person name="Ushijima Y."/>
            <person name="Luo C."/>
            <person name="Goshima F."/>
            <person name="Yamauchi Y."/>
            <person name="Kimura H."/>
            <person name="Nishiyama Y."/>
        </authorList>
    </citation>
    <scope>NUCLEOTIDE SEQUENCE [LARGE SCALE GENOMIC DNA]</scope>
    <source>
        <strain>Nonneuroinvasive mutant HF10</strain>
    </source>
</reference>
<reference key="3">
    <citation type="submission" date="2008-12" db="EMBL/GenBank/DDBJ databases">
        <title>Herpes simplex virus type 1 bacterial artificial chromosome.</title>
        <authorList>
            <person name="Cunningham C."/>
            <person name="Davison A.J."/>
        </authorList>
    </citation>
    <scope>NUCLEOTIDE SEQUENCE [LARGE SCALE GENOMIC DNA]</scope>
    <source>
        <strain>17 syn+</strain>
    </source>
</reference>
<accession>P10234</accession>
<accession>Q09I84</accession>
<sequence length="371" mass="39128">MSQWGSGAILVQPDSLGRGYDGDWHTAVATRGGGVVQLNLVNRRAVAFMPKVSGDSGWAVGRVSLDLRMAMPADFCAIIHAPALASPGHHVILGLIDSGYRGTVMAVVVAPKRTREFAPGTLRVDVTFLDILATPPALTEPISLRQFPQLAPPPPTGAGIREDPWLEGALGAPSVTTALPARRRGRSLVYAGELTPVQTEHGDGVREAIAFLPKREEDAGFDIVVRRPVTVPANGTTVVQPSLRMLHADAGPAACYVLGRSSLNARGLLVVPTRWLPGHVCAFVVYNLTGVPVTLEAGAKVAQLLVAGADALPWIPPDNFHGTKALRNYPRGVPDSTAEPRNPPLLVFTNEFDAEAPPSERGTGGFGSTGI</sequence>
<evidence type="ECO:0000255" key="1">
    <source>
        <dbReference type="HAMAP-Rule" id="MF_04031"/>
    </source>
</evidence>
<evidence type="ECO:0000256" key="2">
    <source>
        <dbReference type="SAM" id="MobiDB-lite"/>
    </source>
</evidence>
<organism>
    <name type="scientific">Human herpesvirus 1 (strain 17)</name>
    <name type="common">HHV-1</name>
    <name type="synonym">Human herpes simplex virus 1</name>
    <dbReference type="NCBI Taxonomy" id="10299"/>
    <lineage>
        <taxon>Viruses</taxon>
        <taxon>Duplodnaviria</taxon>
        <taxon>Heunggongvirae</taxon>
        <taxon>Peploviricota</taxon>
        <taxon>Herviviricetes</taxon>
        <taxon>Herpesvirales</taxon>
        <taxon>Orthoherpesviridae</taxon>
        <taxon>Alphaherpesvirinae</taxon>
        <taxon>Simplexvirus</taxon>
        <taxon>Simplexvirus humanalpha1</taxon>
        <taxon>Human herpesvirus 1</taxon>
    </lineage>
</organism>
<comment type="function">
    <text evidence="1">Involved in nucleotide metabolism: produces dUMP, the immediate precursor of thymidine nucleotides and decreases the intracellular concentration of dUTP to avoid uracil incorporation into viral DNA.</text>
</comment>
<comment type="catalytic activity">
    <reaction evidence="1">
        <text>dUTP + H2O = dUMP + diphosphate + H(+)</text>
        <dbReference type="Rhea" id="RHEA:10248"/>
        <dbReference type="ChEBI" id="CHEBI:15377"/>
        <dbReference type="ChEBI" id="CHEBI:15378"/>
        <dbReference type="ChEBI" id="CHEBI:33019"/>
        <dbReference type="ChEBI" id="CHEBI:61555"/>
        <dbReference type="ChEBI" id="CHEBI:246422"/>
        <dbReference type="EC" id="3.6.1.23"/>
    </reaction>
</comment>
<comment type="cofactor">
    <cofactor evidence="1">
        <name>Mg(2+)</name>
        <dbReference type="ChEBI" id="CHEBI:18420"/>
    </cofactor>
</comment>
<comment type="similarity">
    <text evidence="1">Belongs to the dUTPase family.</text>
</comment>
<protein>
    <recommendedName>
        <fullName evidence="1">Deoxyuridine 5'-triphosphate nucleotidohydrolase</fullName>
        <shortName evidence="1">dUTPase</shortName>
        <ecNumber evidence="1">3.6.1.23</ecNumber>
    </recommendedName>
    <alternativeName>
        <fullName evidence="1">dUTP pyrophosphatase</fullName>
    </alternativeName>
</protein>
<proteinExistence type="inferred from homology"/>
<keyword id="KW-0378">Hydrolase</keyword>
<keyword id="KW-0460">Magnesium</keyword>
<keyword id="KW-0479">Metal-binding</keyword>
<keyword id="KW-0546">Nucleotide metabolism</keyword>
<keyword id="KW-1185">Reference proteome</keyword>
<dbReference type="EC" id="3.6.1.23" evidence="1"/>
<dbReference type="EMBL" id="X14112">
    <property type="protein sequence ID" value="CAA32301.1"/>
    <property type="molecule type" value="Genomic_DNA"/>
</dbReference>
<dbReference type="EMBL" id="DQ889502">
    <property type="protein sequence ID" value="ABI63511.1"/>
    <property type="molecule type" value="Genomic_DNA"/>
</dbReference>
<dbReference type="EMBL" id="FJ593289">
    <property type="protein sequence ID" value="ACM62274.1"/>
    <property type="molecule type" value="Genomic_DNA"/>
</dbReference>
<dbReference type="PIR" id="E30089">
    <property type="entry name" value="WMBEY0"/>
</dbReference>
<dbReference type="RefSeq" id="YP_009137126.1">
    <property type="nucleotide sequence ID" value="NC_001806.2"/>
</dbReference>
<dbReference type="BioGRID" id="971447">
    <property type="interactions" value="2"/>
</dbReference>
<dbReference type="DIP" id="DIP-62052N"/>
<dbReference type="IntAct" id="P10234">
    <property type="interactions" value="1"/>
</dbReference>
<dbReference type="DNASU" id="2703421"/>
<dbReference type="GeneID" id="2703421"/>
<dbReference type="KEGG" id="vg:2703421"/>
<dbReference type="Proteomes" id="UP000009294">
    <property type="component" value="Segment"/>
</dbReference>
<dbReference type="Proteomes" id="UP000180652">
    <property type="component" value="Segment"/>
</dbReference>
<dbReference type="GO" id="GO:0004170">
    <property type="term" value="F:dUTP diphosphatase activity"/>
    <property type="evidence" value="ECO:0007669"/>
    <property type="project" value="UniProtKB-EC"/>
</dbReference>
<dbReference type="GO" id="GO:0046872">
    <property type="term" value="F:metal ion binding"/>
    <property type="evidence" value="ECO:0007669"/>
    <property type="project" value="UniProtKB-KW"/>
</dbReference>
<dbReference type="GO" id="GO:0046080">
    <property type="term" value="P:dUTP metabolic process"/>
    <property type="evidence" value="ECO:0007669"/>
    <property type="project" value="InterPro"/>
</dbReference>
<dbReference type="Gene3D" id="2.70.40.10">
    <property type="match status" value="2"/>
</dbReference>
<dbReference type="HAMAP" id="MF_04031">
    <property type="entry name" value="HSV_DUT"/>
    <property type="match status" value="1"/>
</dbReference>
<dbReference type="InterPro" id="IPR029054">
    <property type="entry name" value="dUTPase-like"/>
</dbReference>
<dbReference type="InterPro" id="IPR036157">
    <property type="entry name" value="dUTPase-like_sf"/>
</dbReference>
<dbReference type="InterPro" id="IPR034745">
    <property type="entry name" value="HSV_DUT"/>
</dbReference>
<dbReference type="Pfam" id="PF00692">
    <property type="entry name" value="dUTPase"/>
    <property type="match status" value="1"/>
</dbReference>
<dbReference type="SUPFAM" id="SSF51283">
    <property type="entry name" value="dUTPase-like"/>
    <property type="match status" value="2"/>
</dbReference>